<feature type="chain" id="PRO_0000322523" description="V-type ATP synthase subunit E">
    <location>
        <begin position="1"/>
        <end position="212"/>
    </location>
</feature>
<reference key="1">
    <citation type="journal article" date="2006" name="Appl. Environ. Microbiol.">
        <title>Complete genome sequence of the marine, chemolithoautotrophic, ammonia-oxidizing bacterium Nitrosococcus oceani ATCC 19707.</title>
        <authorList>
            <person name="Klotz M.G."/>
            <person name="Arp D.J."/>
            <person name="Chain P.S.G."/>
            <person name="El-Sheikh A.F."/>
            <person name="Hauser L.J."/>
            <person name="Hommes N.G."/>
            <person name="Larimer F.W."/>
            <person name="Malfatti S.A."/>
            <person name="Norton J.M."/>
            <person name="Poret-Peterson A.T."/>
            <person name="Vergez L.M."/>
            <person name="Ward B.B."/>
        </authorList>
    </citation>
    <scope>NUCLEOTIDE SEQUENCE [LARGE SCALE GENOMIC DNA]</scope>
    <source>
        <strain>ATCC 19707 / BCRC 17464 / JCM 30415 / NCIMB 11848 / C-107</strain>
    </source>
</reference>
<organism>
    <name type="scientific">Nitrosococcus oceani (strain ATCC 19707 / BCRC 17464 / JCM 30415 / NCIMB 11848 / C-107)</name>
    <dbReference type="NCBI Taxonomy" id="323261"/>
    <lineage>
        <taxon>Bacteria</taxon>
        <taxon>Pseudomonadati</taxon>
        <taxon>Pseudomonadota</taxon>
        <taxon>Gammaproteobacteria</taxon>
        <taxon>Chromatiales</taxon>
        <taxon>Chromatiaceae</taxon>
        <taxon>Nitrosococcus</taxon>
    </lineage>
</organism>
<sequence>MTAEASVETLEAALLARAKRLAEEYLSRAQHSRDRIIEEANERLRLREEREILAAKAMAERVYRRQVQASELKLQGKLDRLRWEWVQAVVQNLSHQCKVLATDKSRYLPVLQRLLAAGAAAIEREELIAEINQQDLGRLQETWKTFAAEAVSDKCVVLSSEPLTCSGGVRVVSKDGRIRVDNTFEGRLERLAEELHQSIMERLFVPPSGLHG</sequence>
<evidence type="ECO:0000255" key="1">
    <source>
        <dbReference type="HAMAP-Rule" id="MF_00311"/>
    </source>
</evidence>
<accession>Q3J9F2</accession>
<gene>
    <name evidence="1" type="primary">atpE</name>
    <name type="ordered locus">Noc_2084</name>
</gene>
<dbReference type="EMBL" id="CP000127">
    <property type="protein sequence ID" value="ABA58544.1"/>
    <property type="molecule type" value="Genomic_DNA"/>
</dbReference>
<dbReference type="RefSeq" id="WP_002809825.1">
    <property type="nucleotide sequence ID" value="NC_007484.1"/>
</dbReference>
<dbReference type="SMR" id="Q3J9F2"/>
<dbReference type="STRING" id="323261.Noc_2084"/>
<dbReference type="KEGG" id="noc:Noc_2084"/>
<dbReference type="eggNOG" id="COG1390">
    <property type="taxonomic scope" value="Bacteria"/>
</dbReference>
<dbReference type="HOGENOM" id="CLU_1299256_0_0_6"/>
<dbReference type="InParanoid" id="Q3J9F2"/>
<dbReference type="Proteomes" id="UP000006838">
    <property type="component" value="Chromosome"/>
</dbReference>
<dbReference type="GO" id="GO:0033178">
    <property type="term" value="C:proton-transporting two-sector ATPase complex, catalytic domain"/>
    <property type="evidence" value="ECO:0007669"/>
    <property type="project" value="InterPro"/>
</dbReference>
<dbReference type="GO" id="GO:0005524">
    <property type="term" value="F:ATP binding"/>
    <property type="evidence" value="ECO:0007669"/>
    <property type="project" value="UniProtKB-UniRule"/>
</dbReference>
<dbReference type="GO" id="GO:0046933">
    <property type="term" value="F:proton-transporting ATP synthase activity, rotational mechanism"/>
    <property type="evidence" value="ECO:0007669"/>
    <property type="project" value="UniProtKB-UniRule"/>
</dbReference>
<dbReference type="GO" id="GO:0046961">
    <property type="term" value="F:proton-transporting ATPase activity, rotational mechanism"/>
    <property type="evidence" value="ECO:0007669"/>
    <property type="project" value="InterPro"/>
</dbReference>
<dbReference type="GO" id="GO:0042777">
    <property type="term" value="P:proton motive force-driven plasma membrane ATP synthesis"/>
    <property type="evidence" value="ECO:0007669"/>
    <property type="project" value="UniProtKB-UniRule"/>
</dbReference>
<dbReference type="Gene3D" id="3.30.2320.30">
    <property type="entry name" value="ATP synthase, E subunit, C-terminal"/>
    <property type="match status" value="1"/>
</dbReference>
<dbReference type="HAMAP" id="MF_00311">
    <property type="entry name" value="ATP_synth_E_arch"/>
    <property type="match status" value="1"/>
</dbReference>
<dbReference type="InterPro" id="IPR038495">
    <property type="entry name" value="ATPase_E_C"/>
</dbReference>
<dbReference type="InterPro" id="IPR002842">
    <property type="entry name" value="ATPase_V1_Esu"/>
</dbReference>
<dbReference type="PANTHER" id="PTHR45715">
    <property type="entry name" value="ATPASE H+-TRANSPORTING V1 SUBUNIT E1A-RELATED"/>
    <property type="match status" value="1"/>
</dbReference>
<dbReference type="Pfam" id="PF01991">
    <property type="entry name" value="vATP-synt_E"/>
    <property type="match status" value="1"/>
</dbReference>
<dbReference type="SUPFAM" id="SSF160527">
    <property type="entry name" value="V-type ATPase subunit E-like"/>
    <property type="match status" value="1"/>
</dbReference>
<name>VATE_NITOC</name>
<protein>
    <recommendedName>
        <fullName>V-type ATP synthase subunit E</fullName>
    </recommendedName>
    <alternativeName>
        <fullName evidence="1">V-ATPase subunit E</fullName>
    </alternativeName>
</protein>
<proteinExistence type="inferred from homology"/>
<keyword id="KW-0066">ATP synthesis</keyword>
<keyword id="KW-0375">Hydrogen ion transport</keyword>
<keyword id="KW-0406">Ion transport</keyword>
<keyword id="KW-1185">Reference proteome</keyword>
<keyword id="KW-0813">Transport</keyword>
<comment type="function">
    <text evidence="1">Produces ATP from ADP in the presence of a proton gradient across the membrane.</text>
</comment>
<comment type="similarity">
    <text evidence="1">Belongs to the V-ATPase E subunit family.</text>
</comment>